<sequence length="636" mass="71351">MSSETLEFQAEARQLLQLMVHSIYSNKDVFLRELISNASDALDKLRLASLRDKDLDVDTADLHIAIEIDPDARTLTVRDNGIGMSRDEVVQVIGTIAKSGTAELLRTLRESADAETSQELIGQFGVGFYAAFMVADRVVLVTREAGATDGTRWESSGEGTYTIASATDAPQGTAVTLHLKPADSEDNLHDYATEWTVRQIVKRYSDFIAHPIRMAVEQPGTDGGESTTEVQTLNSMKALWARSRDEVEPAEYHEFYKHVSHDWADPLEVVHMRGEGTFEYEALLFLPTHAPLDLFSPQGRRGVQLYVKRVFIMDDCEALMPGYLRFVKGVVDAHDLSLNISRELLQQDRQIQVVRRRLVKKILATVKELKANQPEKYRTFWTEFGAVVKEGLIDDTENRDSLLEILSVASTHDPAEPTDLADYVTRMKDGQTDIYYATGENRSTIENSPHMEAFRAKGFEVLLLTDPVDEVWVERVGEYEGKTLRSVAKGQVDLDTEEERSAAEAERERQRTEYADLLTWLSSTLADQVREVRLSARLTTSPACVVGDAHDVTPTLEKMYRAMGHEVPQVKRILELNPTHPLVSGLRKAREQGVTEESLKETAELLYGMALLAEGGELADPSHFTRILAERLARTL</sequence>
<comment type="function">
    <text evidence="1">Molecular chaperone. Has ATPase activity.</text>
</comment>
<comment type="subunit">
    <text evidence="1">Homodimer.</text>
</comment>
<comment type="subcellular location">
    <subcellularLocation>
        <location evidence="1">Cytoplasm</location>
    </subcellularLocation>
</comment>
<comment type="similarity">
    <text evidence="1">Belongs to the heat shock protein 90 family.</text>
</comment>
<feature type="chain" id="PRO_1000081525" description="Chaperone protein HtpG">
    <location>
        <begin position="1"/>
        <end position="636"/>
    </location>
</feature>
<feature type="region of interest" description="A; substrate-binding" evidence="1">
    <location>
        <begin position="1"/>
        <end position="342"/>
    </location>
</feature>
<feature type="region of interest" description="B" evidence="1">
    <location>
        <begin position="343"/>
        <end position="558"/>
    </location>
</feature>
<feature type="region of interest" description="C" evidence="1">
    <location>
        <begin position="559"/>
        <end position="636"/>
    </location>
</feature>
<reference key="1">
    <citation type="journal article" date="2007" name="Proc. Natl. Acad. Sci. U.S.A.">
        <title>Genome sequencing reveals complex secondary metabolome in the marine actinomycete Salinispora tropica.</title>
        <authorList>
            <person name="Udwary D.W."/>
            <person name="Zeigler L."/>
            <person name="Asolkar R.N."/>
            <person name="Singan V."/>
            <person name="Lapidus A."/>
            <person name="Fenical W."/>
            <person name="Jensen P.R."/>
            <person name="Moore B.S."/>
        </authorList>
    </citation>
    <scope>NUCLEOTIDE SEQUENCE [LARGE SCALE GENOMIC DNA]</scope>
    <source>
        <strain>ATCC BAA-916 / DSM 44818 / JCM 13857 / NBRC 105044 / CNB-440</strain>
    </source>
</reference>
<keyword id="KW-0067">ATP-binding</keyword>
<keyword id="KW-0143">Chaperone</keyword>
<keyword id="KW-0963">Cytoplasm</keyword>
<keyword id="KW-0547">Nucleotide-binding</keyword>
<keyword id="KW-1185">Reference proteome</keyword>
<keyword id="KW-0346">Stress response</keyword>
<gene>
    <name evidence="1" type="primary">htpG</name>
    <name type="ordered locus">Strop_2474</name>
</gene>
<evidence type="ECO:0000255" key="1">
    <source>
        <dbReference type="HAMAP-Rule" id="MF_00505"/>
    </source>
</evidence>
<dbReference type="EMBL" id="CP000667">
    <property type="protein sequence ID" value="ABP54920.1"/>
    <property type="molecule type" value="Genomic_DNA"/>
</dbReference>
<dbReference type="RefSeq" id="WP_012013701.1">
    <property type="nucleotide sequence ID" value="NC_009380.1"/>
</dbReference>
<dbReference type="SMR" id="A4X7S0"/>
<dbReference type="STRING" id="369723.Strop_2474"/>
<dbReference type="KEGG" id="stp:Strop_2474"/>
<dbReference type="PATRIC" id="fig|369723.5.peg.2550"/>
<dbReference type="eggNOG" id="COG0326">
    <property type="taxonomic scope" value="Bacteria"/>
</dbReference>
<dbReference type="HOGENOM" id="CLU_006684_3_0_11"/>
<dbReference type="Proteomes" id="UP000000235">
    <property type="component" value="Chromosome"/>
</dbReference>
<dbReference type="GO" id="GO:0005737">
    <property type="term" value="C:cytoplasm"/>
    <property type="evidence" value="ECO:0007669"/>
    <property type="project" value="UniProtKB-SubCell"/>
</dbReference>
<dbReference type="GO" id="GO:0005524">
    <property type="term" value="F:ATP binding"/>
    <property type="evidence" value="ECO:0007669"/>
    <property type="project" value="UniProtKB-UniRule"/>
</dbReference>
<dbReference type="GO" id="GO:0016887">
    <property type="term" value="F:ATP hydrolysis activity"/>
    <property type="evidence" value="ECO:0007669"/>
    <property type="project" value="InterPro"/>
</dbReference>
<dbReference type="GO" id="GO:0140662">
    <property type="term" value="F:ATP-dependent protein folding chaperone"/>
    <property type="evidence" value="ECO:0007669"/>
    <property type="project" value="InterPro"/>
</dbReference>
<dbReference type="GO" id="GO:0051082">
    <property type="term" value="F:unfolded protein binding"/>
    <property type="evidence" value="ECO:0007669"/>
    <property type="project" value="UniProtKB-UniRule"/>
</dbReference>
<dbReference type="CDD" id="cd16927">
    <property type="entry name" value="HATPase_Hsp90-like"/>
    <property type="match status" value="1"/>
</dbReference>
<dbReference type="FunFam" id="1.20.120.790:FF:000006">
    <property type="entry name" value="Chaperone protein HtpG"/>
    <property type="match status" value="1"/>
</dbReference>
<dbReference type="FunFam" id="3.30.230.80:FF:000002">
    <property type="entry name" value="Molecular chaperone HtpG"/>
    <property type="match status" value="1"/>
</dbReference>
<dbReference type="FunFam" id="3.30.565.10:FF:000009">
    <property type="entry name" value="Molecular chaperone HtpG"/>
    <property type="match status" value="1"/>
</dbReference>
<dbReference type="Gene3D" id="3.30.230.80">
    <property type="match status" value="1"/>
</dbReference>
<dbReference type="Gene3D" id="3.40.50.11260">
    <property type="match status" value="1"/>
</dbReference>
<dbReference type="Gene3D" id="1.20.120.790">
    <property type="entry name" value="Heat shock protein 90, C-terminal domain"/>
    <property type="match status" value="1"/>
</dbReference>
<dbReference type="Gene3D" id="3.30.565.10">
    <property type="entry name" value="Histidine kinase-like ATPase, C-terminal domain"/>
    <property type="match status" value="1"/>
</dbReference>
<dbReference type="HAMAP" id="MF_00505">
    <property type="entry name" value="HSP90"/>
    <property type="match status" value="1"/>
</dbReference>
<dbReference type="InterPro" id="IPR036890">
    <property type="entry name" value="HATPase_C_sf"/>
</dbReference>
<dbReference type="InterPro" id="IPR019805">
    <property type="entry name" value="Heat_shock_protein_90_CS"/>
</dbReference>
<dbReference type="InterPro" id="IPR037196">
    <property type="entry name" value="HSP90_C"/>
</dbReference>
<dbReference type="InterPro" id="IPR001404">
    <property type="entry name" value="Hsp90_fam"/>
</dbReference>
<dbReference type="InterPro" id="IPR020575">
    <property type="entry name" value="Hsp90_N"/>
</dbReference>
<dbReference type="InterPro" id="IPR020568">
    <property type="entry name" value="Ribosomal_Su5_D2-typ_SF"/>
</dbReference>
<dbReference type="NCBIfam" id="NF003555">
    <property type="entry name" value="PRK05218.1"/>
    <property type="match status" value="1"/>
</dbReference>
<dbReference type="PANTHER" id="PTHR11528">
    <property type="entry name" value="HEAT SHOCK PROTEIN 90 FAMILY MEMBER"/>
    <property type="match status" value="1"/>
</dbReference>
<dbReference type="Pfam" id="PF13589">
    <property type="entry name" value="HATPase_c_3"/>
    <property type="match status" value="1"/>
</dbReference>
<dbReference type="Pfam" id="PF00183">
    <property type="entry name" value="HSP90"/>
    <property type="match status" value="1"/>
</dbReference>
<dbReference type="PIRSF" id="PIRSF002583">
    <property type="entry name" value="Hsp90"/>
    <property type="match status" value="1"/>
</dbReference>
<dbReference type="PRINTS" id="PR00775">
    <property type="entry name" value="HEATSHOCK90"/>
</dbReference>
<dbReference type="SMART" id="SM00387">
    <property type="entry name" value="HATPase_c"/>
    <property type="match status" value="1"/>
</dbReference>
<dbReference type="SUPFAM" id="SSF55874">
    <property type="entry name" value="ATPase domain of HSP90 chaperone/DNA topoisomerase II/histidine kinase"/>
    <property type="match status" value="1"/>
</dbReference>
<dbReference type="SUPFAM" id="SSF110942">
    <property type="entry name" value="HSP90 C-terminal domain"/>
    <property type="match status" value="1"/>
</dbReference>
<dbReference type="SUPFAM" id="SSF54211">
    <property type="entry name" value="Ribosomal protein S5 domain 2-like"/>
    <property type="match status" value="1"/>
</dbReference>
<dbReference type="PROSITE" id="PS00298">
    <property type="entry name" value="HSP90"/>
    <property type="match status" value="1"/>
</dbReference>
<protein>
    <recommendedName>
        <fullName evidence="1">Chaperone protein HtpG</fullName>
    </recommendedName>
    <alternativeName>
        <fullName evidence="1">Heat shock protein HtpG</fullName>
    </alternativeName>
    <alternativeName>
        <fullName evidence="1">High temperature protein G</fullName>
    </alternativeName>
</protein>
<organism>
    <name type="scientific">Salinispora tropica (strain ATCC BAA-916 / DSM 44818 / JCM 13857 / NBRC 105044 / CNB-440)</name>
    <dbReference type="NCBI Taxonomy" id="369723"/>
    <lineage>
        <taxon>Bacteria</taxon>
        <taxon>Bacillati</taxon>
        <taxon>Actinomycetota</taxon>
        <taxon>Actinomycetes</taxon>
        <taxon>Micromonosporales</taxon>
        <taxon>Micromonosporaceae</taxon>
        <taxon>Salinispora</taxon>
    </lineage>
</organism>
<accession>A4X7S0</accession>
<name>HTPG_SALTO</name>
<proteinExistence type="inferred from homology"/>